<accession>P75489</accession>
<organism>
    <name type="scientific">Mycoplasma pneumoniae (strain ATCC 29342 / M129 / Subtype 1)</name>
    <name type="common">Mycoplasmoides pneumoniae</name>
    <dbReference type="NCBI Taxonomy" id="272634"/>
    <lineage>
        <taxon>Bacteria</taxon>
        <taxon>Bacillati</taxon>
        <taxon>Mycoplasmatota</taxon>
        <taxon>Mycoplasmoidales</taxon>
        <taxon>Mycoplasmoidaceae</taxon>
        <taxon>Mycoplasmoides</taxon>
    </lineage>
</organism>
<reference key="1">
    <citation type="journal article" date="1996" name="Nucleic Acids Res.">
        <title>Complete sequence analysis of the genome of the bacterium Mycoplasma pneumoniae.</title>
        <authorList>
            <person name="Himmelreich R."/>
            <person name="Hilbert H."/>
            <person name="Plagens H."/>
            <person name="Pirkl E."/>
            <person name="Li B.-C."/>
            <person name="Herrmann R."/>
        </authorList>
    </citation>
    <scope>NUCLEOTIDE SEQUENCE [LARGE SCALE GENOMIC DNA]</scope>
    <source>
        <strain>ATCC 29342 / M129 / Subtype 1</strain>
    </source>
</reference>
<dbReference type="EMBL" id="U00089">
    <property type="protein sequence ID" value="AAB96195.1"/>
    <property type="molecule type" value="Genomic_DNA"/>
</dbReference>
<dbReference type="PIR" id="S73873">
    <property type="entry name" value="S73873"/>
</dbReference>
<dbReference type="RefSeq" id="NP_109976.1">
    <property type="nucleotide sequence ID" value="NC_000912.1"/>
</dbReference>
<dbReference type="RefSeq" id="WP_010874645.1">
    <property type="nucleotide sequence ID" value="NZ_OU342337.1"/>
</dbReference>
<dbReference type="STRING" id="272634.MPN_288"/>
<dbReference type="EnsemblBacteria" id="AAB96195">
    <property type="protein sequence ID" value="AAB96195"/>
    <property type="gene ID" value="MPN_288"/>
</dbReference>
<dbReference type="KEGG" id="mpn:MPN_288"/>
<dbReference type="PATRIC" id="fig|272634.6.peg.312"/>
<dbReference type="HOGENOM" id="CLU_017227_1_0_14"/>
<dbReference type="OrthoDB" id="393769at2"/>
<dbReference type="BioCyc" id="MPNE272634:G1GJ3-454-MONOMER"/>
<dbReference type="Proteomes" id="UP000000808">
    <property type="component" value="Chromosome"/>
</dbReference>
<dbReference type="GO" id="GO:0005886">
    <property type="term" value="C:plasma membrane"/>
    <property type="evidence" value="ECO:0007669"/>
    <property type="project" value="UniProtKB-SubCell"/>
</dbReference>
<dbReference type="InterPro" id="IPR004890">
    <property type="entry name" value="Lipoprotein_10_C"/>
</dbReference>
<dbReference type="InterPro" id="IPR004984">
    <property type="entry name" value="Mycoplasma_lipoprotein_cen_dom"/>
</dbReference>
<dbReference type="InterPro" id="IPR054825">
    <property type="entry name" value="P68-like"/>
</dbReference>
<dbReference type="NCBIfam" id="NF045826">
    <property type="entry name" value="lipo_P68"/>
    <property type="match status" value="1"/>
</dbReference>
<dbReference type="Pfam" id="PF03202">
    <property type="entry name" value="Lipoprotein_10"/>
    <property type="match status" value="1"/>
</dbReference>
<dbReference type="Pfam" id="PF03305">
    <property type="entry name" value="Lipoprotein_X"/>
    <property type="match status" value="1"/>
</dbReference>
<dbReference type="PROSITE" id="PS51257">
    <property type="entry name" value="PROKAR_LIPOPROTEIN"/>
    <property type="match status" value="1"/>
</dbReference>
<gene>
    <name type="ordered locus">MPN_288</name>
    <name type="ORF">A65_orf787o</name>
    <name type="ORF">MP547</name>
</gene>
<evidence type="ECO:0000255" key="1">
    <source>
        <dbReference type="PROSITE-ProRule" id="PRU00303"/>
    </source>
</evidence>
<evidence type="ECO:0000256" key="2">
    <source>
        <dbReference type="SAM" id="MobiDB-lite"/>
    </source>
</evidence>
<evidence type="ECO:0000305" key="3"/>
<keyword id="KW-1003">Cell membrane</keyword>
<keyword id="KW-0449">Lipoprotein</keyword>
<keyword id="KW-0472">Membrane</keyword>
<keyword id="KW-0564">Palmitate</keyword>
<keyword id="KW-1185">Reference proteome</keyword>
<keyword id="KW-0732">Signal</keyword>
<proteinExistence type="inferred from homology"/>
<sequence length="787" mass="86890">MKFKYCAIFFSGFLGLSAILAACGARGKFDQVDDGKIKLAFSLTSKSASNALQAIVKKYNEVKKPGDYHIEITQIAGGYDGGRSDLQTRVNVKDTTNFYNLILNYPDLVSTLGRVGMELLFDKVNTDKLSDRFLDFNKRISAISKPGIYGIPVSLSTEVLSINGPVLHYILKSAKGDSDNVKVSQRTGETTQKSKVTNPLKINTQNDPATKDLWEKIEASAKANGKSNKDGQTKGKKKVEKSSSSSLVNLKQSTDQTTTDDGSQKSDNKIKESWGEYQEVDGGLKNFEFKASIFENWHDLLDFSTRVAKSFTNVKGKDIKKGTDIQGVLGVDSTPNSLFTSVFAAGGGDYNNFFYKIENGRADFSNFKNKGTSYQNLQKVFGDFKGLIDKNGIFVNKGGSYSSNFQKFHQLAYSISSTSGFFYSFAGNSAKRLKFGDNFIEFPRFTQEIKAPSTENGGQSNLLGTFEVKDSSKSKEVKKTNRKEDGAQNQGKKESDKKTIYLYKSQIPSDKTEGENAILIKEQNVINQLEQAAKKDEKGETVTNKVASLETKAANAKKDSSKTIIGYTTTDNVHEDGKNIFKINKLKTEDYDRKIIVGATEEVLEQSSTLQSDEAIVLPAPGKYQSGDAKKVTITQGPNIIGIHANEKENAETQKFVNWFLNNTESWEVKNGKDSSTKQQTAAEFFAESASYILPLKEIFDKDNKKATENKDNNTSNKKQANTYAEKALDLFQQISKGDIVSYSDPSDFRSGKFRDGIGSNFNAAVSSKADFDRFVKGFIATLGSEI</sequence>
<feature type="signal peptide" evidence="1">
    <location>
        <begin position="1"/>
        <end position="22"/>
    </location>
</feature>
<feature type="chain" id="PRO_0000018731" description="Uncharacterized lipoprotein MPN_288">
    <location>
        <begin position="23"/>
        <end position="787"/>
    </location>
</feature>
<feature type="region of interest" description="Disordered" evidence="2">
    <location>
        <begin position="178"/>
        <end position="270"/>
    </location>
</feature>
<feature type="region of interest" description="Disordered" evidence="2">
    <location>
        <begin position="473"/>
        <end position="495"/>
    </location>
</feature>
<feature type="compositionally biased region" description="Polar residues" evidence="2">
    <location>
        <begin position="181"/>
        <end position="208"/>
    </location>
</feature>
<feature type="compositionally biased region" description="Basic and acidic residues" evidence="2">
    <location>
        <begin position="209"/>
        <end position="219"/>
    </location>
</feature>
<feature type="compositionally biased region" description="Low complexity" evidence="2">
    <location>
        <begin position="242"/>
        <end position="261"/>
    </location>
</feature>
<feature type="lipid moiety-binding region" description="N-palmitoyl cysteine" evidence="1">
    <location>
        <position position="23"/>
    </location>
</feature>
<feature type="lipid moiety-binding region" description="S-diacylglycerol cysteine" evidence="1">
    <location>
        <position position="23"/>
    </location>
</feature>
<comment type="subcellular location">
    <subcellularLocation>
        <location evidence="1">Cell membrane</location>
        <topology evidence="1">Lipid-anchor</topology>
    </subcellularLocation>
</comment>
<comment type="similarity">
    <text evidence="3">Belongs to the MG185/MG260 family.</text>
</comment>
<protein>
    <recommendedName>
        <fullName>Uncharacterized lipoprotein MPN_288</fullName>
    </recommendedName>
</protein>
<name>Y288_MYCPN</name>